<accession>Q28KG7</accession>
<name>RECR_JANSC</name>
<gene>
    <name evidence="1" type="primary">recR</name>
    <name type="ordered locus">Jann_3878</name>
</gene>
<evidence type="ECO:0000255" key="1">
    <source>
        <dbReference type="HAMAP-Rule" id="MF_00017"/>
    </source>
</evidence>
<reference key="1">
    <citation type="submission" date="2006-02" db="EMBL/GenBank/DDBJ databases">
        <title>Complete sequence of chromosome of Jannaschia sp. CCS1.</title>
        <authorList>
            <consortium name="US DOE Joint Genome Institute"/>
            <person name="Copeland A."/>
            <person name="Lucas S."/>
            <person name="Lapidus A."/>
            <person name="Barry K."/>
            <person name="Detter J.C."/>
            <person name="Glavina del Rio T."/>
            <person name="Hammon N."/>
            <person name="Israni S."/>
            <person name="Pitluck S."/>
            <person name="Brettin T."/>
            <person name="Bruce D."/>
            <person name="Han C."/>
            <person name="Tapia R."/>
            <person name="Gilna P."/>
            <person name="Chertkov O."/>
            <person name="Saunders E."/>
            <person name="Schmutz J."/>
            <person name="Larimer F."/>
            <person name="Land M."/>
            <person name="Kyrpides N."/>
            <person name="Lykidis A."/>
            <person name="Moran M.A."/>
            <person name="Belas R."/>
            <person name="Ye W."/>
            <person name="Buchan A."/>
            <person name="Gonzalez J.M."/>
            <person name="Schell M.A."/>
            <person name="Richardson P."/>
        </authorList>
    </citation>
    <scope>NUCLEOTIDE SEQUENCE [LARGE SCALE GENOMIC DNA]</scope>
    <source>
        <strain>CCS1</strain>
    </source>
</reference>
<sequence>MADTSKDIEELIGIMARLPGLGPRSARRAVLTLIKKRGALMRPLAETMARVAESARECVNCGNIGTGDLCEICMDVRRATGEICVVEDVADLWAMERGQAFKGRYHVLGGTLSALDDVGPEDLRIPKLRARMADEGITEVILALNATVDGQTTAHYIADELAPTGVTLSSLAQGVPIGGELDYLDDGTISAALRARKSL</sequence>
<organism>
    <name type="scientific">Jannaschia sp. (strain CCS1)</name>
    <dbReference type="NCBI Taxonomy" id="290400"/>
    <lineage>
        <taxon>Bacteria</taxon>
        <taxon>Pseudomonadati</taxon>
        <taxon>Pseudomonadota</taxon>
        <taxon>Alphaproteobacteria</taxon>
        <taxon>Rhodobacterales</taxon>
        <taxon>Roseobacteraceae</taxon>
        <taxon>Jannaschia</taxon>
    </lineage>
</organism>
<keyword id="KW-0227">DNA damage</keyword>
<keyword id="KW-0233">DNA recombination</keyword>
<keyword id="KW-0234">DNA repair</keyword>
<keyword id="KW-0479">Metal-binding</keyword>
<keyword id="KW-1185">Reference proteome</keyword>
<keyword id="KW-0862">Zinc</keyword>
<keyword id="KW-0863">Zinc-finger</keyword>
<feature type="chain" id="PRO_0000322898" description="Recombination protein RecR">
    <location>
        <begin position="1"/>
        <end position="199"/>
    </location>
</feature>
<feature type="domain" description="Toprim" evidence="1">
    <location>
        <begin position="81"/>
        <end position="176"/>
    </location>
</feature>
<feature type="zinc finger region" description="C4-type" evidence="1">
    <location>
        <begin position="58"/>
        <end position="73"/>
    </location>
</feature>
<proteinExistence type="inferred from homology"/>
<comment type="function">
    <text evidence="1">May play a role in DNA repair. It seems to be involved in an RecBC-independent recombinational process of DNA repair. It may act with RecF and RecO.</text>
</comment>
<comment type="similarity">
    <text evidence="1">Belongs to the RecR family.</text>
</comment>
<dbReference type="EMBL" id="CP000264">
    <property type="protein sequence ID" value="ABD56795.1"/>
    <property type="molecule type" value="Genomic_DNA"/>
</dbReference>
<dbReference type="RefSeq" id="WP_011456992.1">
    <property type="nucleotide sequence ID" value="NC_007802.1"/>
</dbReference>
<dbReference type="SMR" id="Q28KG7"/>
<dbReference type="STRING" id="290400.Jann_3878"/>
<dbReference type="KEGG" id="jan:Jann_3878"/>
<dbReference type="eggNOG" id="COG0353">
    <property type="taxonomic scope" value="Bacteria"/>
</dbReference>
<dbReference type="HOGENOM" id="CLU_060739_1_1_5"/>
<dbReference type="OrthoDB" id="9802672at2"/>
<dbReference type="Proteomes" id="UP000008326">
    <property type="component" value="Chromosome"/>
</dbReference>
<dbReference type="GO" id="GO:0003677">
    <property type="term" value="F:DNA binding"/>
    <property type="evidence" value="ECO:0007669"/>
    <property type="project" value="UniProtKB-UniRule"/>
</dbReference>
<dbReference type="GO" id="GO:0008270">
    <property type="term" value="F:zinc ion binding"/>
    <property type="evidence" value="ECO:0007669"/>
    <property type="project" value="UniProtKB-KW"/>
</dbReference>
<dbReference type="GO" id="GO:0006310">
    <property type="term" value="P:DNA recombination"/>
    <property type="evidence" value="ECO:0007669"/>
    <property type="project" value="UniProtKB-UniRule"/>
</dbReference>
<dbReference type="GO" id="GO:0006281">
    <property type="term" value="P:DNA repair"/>
    <property type="evidence" value="ECO:0007669"/>
    <property type="project" value="UniProtKB-UniRule"/>
</dbReference>
<dbReference type="CDD" id="cd01025">
    <property type="entry name" value="TOPRIM_recR"/>
    <property type="match status" value="1"/>
</dbReference>
<dbReference type="Gene3D" id="3.40.1360.10">
    <property type="match status" value="1"/>
</dbReference>
<dbReference type="Gene3D" id="1.10.8.420">
    <property type="entry name" value="RecR Domain 1"/>
    <property type="match status" value="1"/>
</dbReference>
<dbReference type="HAMAP" id="MF_00017">
    <property type="entry name" value="RecR"/>
    <property type="match status" value="1"/>
</dbReference>
<dbReference type="InterPro" id="IPR000093">
    <property type="entry name" value="DNA_Rcmb_RecR"/>
</dbReference>
<dbReference type="InterPro" id="IPR023627">
    <property type="entry name" value="Rcmb_RecR"/>
</dbReference>
<dbReference type="InterPro" id="IPR015967">
    <property type="entry name" value="Rcmb_RecR_Znf"/>
</dbReference>
<dbReference type="InterPro" id="IPR006171">
    <property type="entry name" value="TOPRIM_dom"/>
</dbReference>
<dbReference type="InterPro" id="IPR034137">
    <property type="entry name" value="TOPRIM_RecR"/>
</dbReference>
<dbReference type="NCBIfam" id="TIGR00615">
    <property type="entry name" value="recR"/>
    <property type="match status" value="1"/>
</dbReference>
<dbReference type="PANTHER" id="PTHR30446">
    <property type="entry name" value="RECOMBINATION PROTEIN RECR"/>
    <property type="match status" value="1"/>
</dbReference>
<dbReference type="PANTHER" id="PTHR30446:SF0">
    <property type="entry name" value="RECOMBINATION PROTEIN RECR"/>
    <property type="match status" value="1"/>
</dbReference>
<dbReference type="Pfam" id="PF21175">
    <property type="entry name" value="RecR_C"/>
    <property type="match status" value="1"/>
</dbReference>
<dbReference type="Pfam" id="PF21176">
    <property type="entry name" value="RecR_HhH"/>
    <property type="match status" value="1"/>
</dbReference>
<dbReference type="Pfam" id="PF02132">
    <property type="entry name" value="RecR_ZnF"/>
    <property type="match status" value="1"/>
</dbReference>
<dbReference type="Pfam" id="PF13662">
    <property type="entry name" value="Toprim_4"/>
    <property type="match status" value="1"/>
</dbReference>
<dbReference type="SMART" id="SM00493">
    <property type="entry name" value="TOPRIM"/>
    <property type="match status" value="1"/>
</dbReference>
<dbReference type="SUPFAM" id="SSF111304">
    <property type="entry name" value="Recombination protein RecR"/>
    <property type="match status" value="1"/>
</dbReference>
<dbReference type="PROSITE" id="PS50880">
    <property type="entry name" value="TOPRIM"/>
    <property type="match status" value="1"/>
</dbReference>
<protein>
    <recommendedName>
        <fullName evidence="1">Recombination protein RecR</fullName>
    </recommendedName>
</protein>